<protein>
    <recommendedName>
        <fullName evidence="1">Large ribosomal subunit protein bL31</fullName>
    </recommendedName>
    <alternativeName>
        <fullName evidence="2">50S ribosomal protein L31</fullName>
    </alternativeName>
</protein>
<keyword id="KW-1185">Reference proteome</keyword>
<keyword id="KW-0687">Ribonucleoprotein</keyword>
<keyword id="KW-0689">Ribosomal protein</keyword>
<keyword id="KW-0694">RNA-binding</keyword>
<keyword id="KW-0699">rRNA-binding</keyword>
<comment type="function">
    <text evidence="1">Binds the 23S rRNA.</text>
</comment>
<comment type="subunit">
    <text evidence="1">Part of the 50S ribosomal subunit.</text>
</comment>
<comment type="similarity">
    <text evidence="1">Belongs to the bacterial ribosomal protein bL31 family. Type A subfamily.</text>
</comment>
<accession>B4RAL5</accession>
<sequence length="74" mass="8293">MKQDTHPDYHFITVVMTDGTTYKTRSTLGKEGDTLNLDIDPKTHPAWTGGGHQLLDRGGRVSRFNAKFGAFTRK</sequence>
<proteinExistence type="inferred from homology"/>
<gene>
    <name evidence="1" type="primary">rpmE</name>
    <name type="ordered locus">PHZ_c3204</name>
</gene>
<reference key="1">
    <citation type="journal article" date="2008" name="BMC Genomics">
        <title>Complete genome of Phenylobacterium zucineum - a novel facultative intracellular bacterium isolated from human erythroleukemia cell line K562.</title>
        <authorList>
            <person name="Luo Y."/>
            <person name="Xu X."/>
            <person name="Ding Z."/>
            <person name="Liu Z."/>
            <person name="Zhang B."/>
            <person name="Yan Z."/>
            <person name="Sun J."/>
            <person name="Hu S."/>
            <person name="Hu X."/>
        </authorList>
    </citation>
    <scope>NUCLEOTIDE SEQUENCE [LARGE SCALE GENOMIC DNA]</scope>
    <source>
        <strain>HLK1</strain>
    </source>
</reference>
<organism>
    <name type="scientific">Phenylobacterium zucineum (strain HLK1)</name>
    <dbReference type="NCBI Taxonomy" id="450851"/>
    <lineage>
        <taxon>Bacteria</taxon>
        <taxon>Pseudomonadati</taxon>
        <taxon>Pseudomonadota</taxon>
        <taxon>Alphaproteobacteria</taxon>
        <taxon>Caulobacterales</taxon>
        <taxon>Caulobacteraceae</taxon>
        <taxon>Phenylobacterium</taxon>
    </lineage>
</organism>
<dbReference type="EMBL" id="CP000747">
    <property type="protein sequence ID" value="ACG79613.1"/>
    <property type="molecule type" value="Genomic_DNA"/>
</dbReference>
<dbReference type="RefSeq" id="WP_012523751.1">
    <property type="nucleotide sequence ID" value="NC_011144.1"/>
</dbReference>
<dbReference type="SMR" id="B4RAL5"/>
<dbReference type="STRING" id="450851.PHZ_c3204"/>
<dbReference type="KEGG" id="pzu:PHZ_c3204"/>
<dbReference type="eggNOG" id="COG0254">
    <property type="taxonomic scope" value="Bacteria"/>
</dbReference>
<dbReference type="HOGENOM" id="CLU_114306_3_2_5"/>
<dbReference type="OrthoDB" id="9803251at2"/>
<dbReference type="Proteomes" id="UP000001868">
    <property type="component" value="Chromosome"/>
</dbReference>
<dbReference type="GO" id="GO:1990904">
    <property type="term" value="C:ribonucleoprotein complex"/>
    <property type="evidence" value="ECO:0007669"/>
    <property type="project" value="UniProtKB-KW"/>
</dbReference>
<dbReference type="GO" id="GO:0005840">
    <property type="term" value="C:ribosome"/>
    <property type="evidence" value="ECO:0007669"/>
    <property type="project" value="UniProtKB-KW"/>
</dbReference>
<dbReference type="GO" id="GO:0019843">
    <property type="term" value="F:rRNA binding"/>
    <property type="evidence" value="ECO:0007669"/>
    <property type="project" value="UniProtKB-KW"/>
</dbReference>
<dbReference type="GO" id="GO:0003735">
    <property type="term" value="F:structural constituent of ribosome"/>
    <property type="evidence" value="ECO:0007669"/>
    <property type="project" value="InterPro"/>
</dbReference>
<dbReference type="GO" id="GO:0006412">
    <property type="term" value="P:translation"/>
    <property type="evidence" value="ECO:0007669"/>
    <property type="project" value="UniProtKB-UniRule"/>
</dbReference>
<dbReference type="Gene3D" id="4.10.830.30">
    <property type="entry name" value="Ribosomal protein L31"/>
    <property type="match status" value="1"/>
</dbReference>
<dbReference type="HAMAP" id="MF_00501">
    <property type="entry name" value="Ribosomal_bL31_1"/>
    <property type="match status" value="1"/>
</dbReference>
<dbReference type="InterPro" id="IPR034704">
    <property type="entry name" value="Ribosomal_bL28/bL31-like_sf"/>
</dbReference>
<dbReference type="InterPro" id="IPR002150">
    <property type="entry name" value="Ribosomal_bL31"/>
</dbReference>
<dbReference type="InterPro" id="IPR027491">
    <property type="entry name" value="Ribosomal_bL31_A"/>
</dbReference>
<dbReference type="InterPro" id="IPR042105">
    <property type="entry name" value="Ribosomal_bL31_sf"/>
</dbReference>
<dbReference type="NCBIfam" id="TIGR00105">
    <property type="entry name" value="L31"/>
    <property type="match status" value="1"/>
</dbReference>
<dbReference type="NCBIfam" id="NF001809">
    <property type="entry name" value="PRK00528.1"/>
    <property type="match status" value="1"/>
</dbReference>
<dbReference type="Pfam" id="PF01197">
    <property type="entry name" value="Ribosomal_L31"/>
    <property type="match status" value="1"/>
</dbReference>
<dbReference type="PRINTS" id="PR01249">
    <property type="entry name" value="RIBOSOMALL31"/>
</dbReference>
<dbReference type="SUPFAM" id="SSF143800">
    <property type="entry name" value="L28p-like"/>
    <property type="match status" value="1"/>
</dbReference>
<dbReference type="PROSITE" id="PS01143">
    <property type="entry name" value="RIBOSOMAL_L31"/>
    <property type="match status" value="1"/>
</dbReference>
<name>RL31_PHEZH</name>
<evidence type="ECO:0000255" key="1">
    <source>
        <dbReference type="HAMAP-Rule" id="MF_00501"/>
    </source>
</evidence>
<evidence type="ECO:0000305" key="2"/>
<feature type="chain" id="PRO_1000126685" description="Large ribosomal subunit protein bL31">
    <location>
        <begin position="1"/>
        <end position="74"/>
    </location>
</feature>